<organism>
    <name type="scientific">Mus musculus</name>
    <name type="common">Mouse</name>
    <dbReference type="NCBI Taxonomy" id="10090"/>
    <lineage>
        <taxon>Eukaryota</taxon>
        <taxon>Metazoa</taxon>
        <taxon>Chordata</taxon>
        <taxon>Craniata</taxon>
        <taxon>Vertebrata</taxon>
        <taxon>Euteleostomi</taxon>
        <taxon>Mammalia</taxon>
        <taxon>Eutheria</taxon>
        <taxon>Euarchontoglires</taxon>
        <taxon>Glires</taxon>
        <taxon>Rodentia</taxon>
        <taxon>Myomorpha</taxon>
        <taxon>Muroidea</taxon>
        <taxon>Muridae</taxon>
        <taxon>Murinae</taxon>
        <taxon>Mus</taxon>
        <taxon>Mus</taxon>
    </lineage>
</organism>
<sequence>MGVKKSLQTGGNLLNLLSSILTVLSTTTNYWTRQQGGHSGLWQECTHGKCSNIPCQNTVAVSAACMVLAATFSIVALGIGIRIQCREAESRRSQNTIVLLFLSGLLLLIALAVYTSKNAWKPEVFFSWSYFFGWLALPFLFIAGFCFLLADMILQSTEAISGFPVCL</sequence>
<name>CLDN2_MOUSE</name>
<feature type="chain" id="PRO_0000271021" description="Claudin domain-containing protein 2">
    <location>
        <begin position="1"/>
        <end position="167"/>
    </location>
</feature>
<feature type="transmembrane region" description="Helical" evidence="1">
    <location>
        <begin position="13"/>
        <end position="32"/>
    </location>
</feature>
<feature type="transmembrane region" description="Helical" evidence="1">
    <location>
        <begin position="61"/>
        <end position="81"/>
    </location>
</feature>
<feature type="transmembrane region" description="Helical" evidence="1">
    <location>
        <begin position="96"/>
        <end position="116"/>
    </location>
</feature>
<feature type="transmembrane region" description="Helical" evidence="1">
    <location>
        <begin position="130"/>
        <end position="150"/>
    </location>
</feature>
<comment type="subcellular location">
    <subcellularLocation>
        <location evidence="2">Membrane</location>
        <topology evidence="2">Multi-pass membrane protein</topology>
    </subcellularLocation>
</comment>
<comment type="similarity">
    <text evidence="2">Belongs to the PMP-22/EMP/MP20 family.</text>
</comment>
<keyword id="KW-0472">Membrane</keyword>
<keyword id="KW-1185">Reference proteome</keyword>
<keyword id="KW-0812">Transmembrane</keyword>
<keyword id="KW-1133">Transmembrane helix</keyword>
<dbReference type="EMBL" id="AK006929">
    <property type="protein sequence ID" value="BAB24795.1"/>
    <property type="molecule type" value="mRNA"/>
</dbReference>
<dbReference type="CCDS" id="CCDS39929.1"/>
<dbReference type="RefSeq" id="NP_083125.1">
    <property type="nucleotide sequence ID" value="NM_028849.2"/>
</dbReference>
<dbReference type="RefSeq" id="XP_017167841.1">
    <property type="nucleotide sequence ID" value="XM_017312352.1"/>
</dbReference>
<dbReference type="RefSeq" id="XP_030098891.1">
    <property type="nucleotide sequence ID" value="XM_030243031.1"/>
</dbReference>
<dbReference type="SMR" id="Q9D9H2"/>
<dbReference type="FunCoup" id="Q9D9H2">
    <property type="interactions" value="456"/>
</dbReference>
<dbReference type="STRING" id="10090.ENSMUSP00000037980"/>
<dbReference type="PhosphoSitePlus" id="Q9D9H2"/>
<dbReference type="PaxDb" id="10090-ENSMUSP00000037980"/>
<dbReference type="Antibodypedia" id="32471">
    <property type="antibodies" value="46 antibodies from 13 providers"/>
</dbReference>
<dbReference type="Ensembl" id="ENSMUST00000040227.3">
    <property type="protein sequence ID" value="ENSMUSP00000037980.2"/>
    <property type="gene ID" value="ENSMUSG00000038973.3"/>
</dbReference>
<dbReference type="Ensembl" id="ENSMUST00000206839.2">
    <property type="protein sequence ID" value="ENSMUSP00000145638.2"/>
    <property type="gene ID" value="ENSMUSG00000038973.3"/>
</dbReference>
<dbReference type="GeneID" id="74276"/>
<dbReference type="KEGG" id="mmu:74276"/>
<dbReference type="UCSC" id="uc009gms.1">
    <property type="organism name" value="mouse"/>
</dbReference>
<dbReference type="AGR" id="MGI:1921526"/>
<dbReference type="CTD" id="125875"/>
<dbReference type="MGI" id="MGI:1921526">
    <property type="gene designation" value="Cldnd2"/>
</dbReference>
<dbReference type="VEuPathDB" id="HostDB:ENSMUSG00000038973"/>
<dbReference type="eggNOG" id="ENOG502SPH8">
    <property type="taxonomic scope" value="Eukaryota"/>
</dbReference>
<dbReference type="GeneTree" id="ENSGT01050000244814"/>
<dbReference type="HOGENOM" id="CLU_136294_0_0_1"/>
<dbReference type="InParanoid" id="Q9D9H2"/>
<dbReference type="OMA" id="NDVFFSW"/>
<dbReference type="OrthoDB" id="5967271at2759"/>
<dbReference type="PhylomeDB" id="Q9D9H2"/>
<dbReference type="TreeFam" id="TF330587"/>
<dbReference type="BioGRID-ORCS" id="74276">
    <property type="hits" value="1 hit in 77 CRISPR screens"/>
</dbReference>
<dbReference type="ChiTaRS" id="Cldnd2">
    <property type="organism name" value="mouse"/>
</dbReference>
<dbReference type="PRO" id="PR:Q9D9H2"/>
<dbReference type="Proteomes" id="UP000000589">
    <property type="component" value="Chromosome 7"/>
</dbReference>
<dbReference type="RNAct" id="Q9D9H2">
    <property type="molecule type" value="protein"/>
</dbReference>
<dbReference type="Bgee" id="ENSMUSG00000038973">
    <property type="expression patterns" value="Expressed in seminiferous tubule of testis and 18 other cell types or tissues"/>
</dbReference>
<dbReference type="ExpressionAtlas" id="Q9D9H2">
    <property type="expression patterns" value="baseline and differential"/>
</dbReference>
<dbReference type="GO" id="GO:0016020">
    <property type="term" value="C:membrane"/>
    <property type="evidence" value="ECO:0007669"/>
    <property type="project" value="UniProtKB-SubCell"/>
</dbReference>
<dbReference type="FunFam" id="1.20.140.150:FF:000032">
    <property type="entry name" value="Claudin domain containing 2"/>
    <property type="match status" value="1"/>
</dbReference>
<dbReference type="Gene3D" id="1.20.140.150">
    <property type="match status" value="1"/>
</dbReference>
<dbReference type="InterPro" id="IPR050579">
    <property type="entry name" value="PMP-22/EMP/MP20-like"/>
</dbReference>
<dbReference type="InterPro" id="IPR004031">
    <property type="entry name" value="PMP22/EMP/MP20/Claudin"/>
</dbReference>
<dbReference type="PANTHER" id="PTHR10671:SF30">
    <property type="entry name" value="CLAUDIN DOMAIN-CONTAINING PROTEIN 2"/>
    <property type="match status" value="1"/>
</dbReference>
<dbReference type="PANTHER" id="PTHR10671">
    <property type="entry name" value="EPITHELIAL MEMBRANE PROTEIN-RELATED"/>
    <property type="match status" value="1"/>
</dbReference>
<dbReference type="Pfam" id="PF00822">
    <property type="entry name" value="PMP22_Claudin"/>
    <property type="match status" value="1"/>
</dbReference>
<reference key="1">
    <citation type="journal article" date="2005" name="Science">
        <title>The transcriptional landscape of the mammalian genome.</title>
        <authorList>
            <person name="Carninci P."/>
            <person name="Kasukawa T."/>
            <person name="Katayama S."/>
            <person name="Gough J."/>
            <person name="Frith M.C."/>
            <person name="Maeda N."/>
            <person name="Oyama R."/>
            <person name="Ravasi T."/>
            <person name="Lenhard B."/>
            <person name="Wells C."/>
            <person name="Kodzius R."/>
            <person name="Shimokawa K."/>
            <person name="Bajic V.B."/>
            <person name="Brenner S.E."/>
            <person name="Batalov S."/>
            <person name="Forrest A.R."/>
            <person name="Zavolan M."/>
            <person name="Davis M.J."/>
            <person name="Wilming L.G."/>
            <person name="Aidinis V."/>
            <person name="Allen J.E."/>
            <person name="Ambesi-Impiombato A."/>
            <person name="Apweiler R."/>
            <person name="Aturaliya R.N."/>
            <person name="Bailey T.L."/>
            <person name="Bansal M."/>
            <person name="Baxter L."/>
            <person name="Beisel K.W."/>
            <person name="Bersano T."/>
            <person name="Bono H."/>
            <person name="Chalk A.M."/>
            <person name="Chiu K.P."/>
            <person name="Choudhary V."/>
            <person name="Christoffels A."/>
            <person name="Clutterbuck D.R."/>
            <person name="Crowe M.L."/>
            <person name="Dalla E."/>
            <person name="Dalrymple B.P."/>
            <person name="de Bono B."/>
            <person name="Della Gatta G."/>
            <person name="di Bernardo D."/>
            <person name="Down T."/>
            <person name="Engstrom P."/>
            <person name="Fagiolini M."/>
            <person name="Faulkner G."/>
            <person name="Fletcher C.F."/>
            <person name="Fukushima T."/>
            <person name="Furuno M."/>
            <person name="Futaki S."/>
            <person name="Gariboldi M."/>
            <person name="Georgii-Hemming P."/>
            <person name="Gingeras T.R."/>
            <person name="Gojobori T."/>
            <person name="Green R.E."/>
            <person name="Gustincich S."/>
            <person name="Harbers M."/>
            <person name="Hayashi Y."/>
            <person name="Hensch T.K."/>
            <person name="Hirokawa N."/>
            <person name="Hill D."/>
            <person name="Huminiecki L."/>
            <person name="Iacono M."/>
            <person name="Ikeo K."/>
            <person name="Iwama A."/>
            <person name="Ishikawa T."/>
            <person name="Jakt M."/>
            <person name="Kanapin A."/>
            <person name="Katoh M."/>
            <person name="Kawasawa Y."/>
            <person name="Kelso J."/>
            <person name="Kitamura H."/>
            <person name="Kitano H."/>
            <person name="Kollias G."/>
            <person name="Krishnan S.P."/>
            <person name="Kruger A."/>
            <person name="Kummerfeld S.K."/>
            <person name="Kurochkin I.V."/>
            <person name="Lareau L.F."/>
            <person name="Lazarevic D."/>
            <person name="Lipovich L."/>
            <person name="Liu J."/>
            <person name="Liuni S."/>
            <person name="McWilliam S."/>
            <person name="Madan Babu M."/>
            <person name="Madera M."/>
            <person name="Marchionni L."/>
            <person name="Matsuda H."/>
            <person name="Matsuzawa S."/>
            <person name="Miki H."/>
            <person name="Mignone F."/>
            <person name="Miyake S."/>
            <person name="Morris K."/>
            <person name="Mottagui-Tabar S."/>
            <person name="Mulder N."/>
            <person name="Nakano N."/>
            <person name="Nakauchi H."/>
            <person name="Ng P."/>
            <person name="Nilsson R."/>
            <person name="Nishiguchi S."/>
            <person name="Nishikawa S."/>
            <person name="Nori F."/>
            <person name="Ohara O."/>
            <person name="Okazaki Y."/>
            <person name="Orlando V."/>
            <person name="Pang K.C."/>
            <person name="Pavan W.J."/>
            <person name="Pavesi G."/>
            <person name="Pesole G."/>
            <person name="Petrovsky N."/>
            <person name="Piazza S."/>
            <person name="Reed J."/>
            <person name="Reid J.F."/>
            <person name="Ring B.Z."/>
            <person name="Ringwald M."/>
            <person name="Rost B."/>
            <person name="Ruan Y."/>
            <person name="Salzberg S.L."/>
            <person name="Sandelin A."/>
            <person name="Schneider C."/>
            <person name="Schoenbach C."/>
            <person name="Sekiguchi K."/>
            <person name="Semple C.A."/>
            <person name="Seno S."/>
            <person name="Sessa L."/>
            <person name="Sheng Y."/>
            <person name="Shibata Y."/>
            <person name="Shimada H."/>
            <person name="Shimada K."/>
            <person name="Silva D."/>
            <person name="Sinclair B."/>
            <person name="Sperling S."/>
            <person name="Stupka E."/>
            <person name="Sugiura K."/>
            <person name="Sultana R."/>
            <person name="Takenaka Y."/>
            <person name="Taki K."/>
            <person name="Tammoja K."/>
            <person name="Tan S.L."/>
            <person name="Tang S."/>
            <person name="Taylor M.S."/>
            <person name="Tegner J."/>
            <person name="Teichmann S.A."/>
            <person name="Ueda H.R."/>
            <person name="van Nimwegen E."/>
            <person name="Verardo R."/>
            <person name="Wei C.L."/>
            <person name="Yagi K."/>
            <person name="Yamanishi H."/>
            <person name="Zabarovsky E."/>
            <person name="Zhu S."/>
            <person name="Zimmer A."/>
            <person name="Hide W."/>
            <person name="Bult C."/>
            <person name="Grimmond S.M."/>
            <person name="Teasdale R.D."/>
            <person name="Liu E.T."/>
            <person name="Brusic V."/>
            <person name="Quackenbush J."/>
            <person name="Wahlestedt C."/>
            <person name="Mattick J.S."/>
            <person name="Hume D.A."/>
            <person name="Kai C."/>
            <person name="Sasaki D."/>
            <person name="Tomaru Y."/>
            <person name="Fukuda S."/>
            <person name="Kanamori-Katayama M."/>
            <person name="Suzuki M."/>
            <person name="Aoki J."/>
            <person name="Arakawa T."/>
            <person name="Iida J."/>
            <person name="Imamura K."/>
            <person name="Itoh M."/>
            <person name="Kato T."/>
            <person name="Kawaji H."/>
            <person name="Kawagashira N."/>
            <person name="Kawashima T."/>
            <person name="Kojima M."/>
            <person name="Kondo S."/>
            <person name="Konno H."/>
            <person name="Nakano K."/>
            <person name="Ninomiya N."/>
            <person name="Nishio T."/>
            <person name="Okada M."/>
            <person name="Plessy C."/>
            <person name="Shibata K."/>
            <person name="Shiraki T."/>
            <person name="Suzuki S."/>
            <person name="Tagami M."/>
            <person name="Waki K."/>
            <person name="Watahiki A."/>
            <person name="Okamura-Oho Y."/>
            <person name="Suzuki H."/>
            <person name="Kawai J."/>
            <person name="Hayashizaki Y."/>
        </authorList>
    </citation>
    <scope>NUCLEOTIDE SEQUENCE [LARGE SCALE MRNA]</scope>
    <source>
        <strain>C57BL/6J</strain>
        <tissue>Testis</tissue>
    </source>
</reference>
<accession>Q9D9H2</accession>
<proteinExistence type="evidence at transcript level"/>
<protein>
    <recommendedName>
        <fullName>Claudin domain-containing protein 2</fullName>
    </recommendedName>
</protein>
<evidence type="ECO:0000255" key="1"/>
<evidence type="ECO:0000305" key="2"/>
<gene>
    <name type="primary">Cldnd2</name>
</gene>